<keyword id="KW-0067">ATP-binding</keyword>
<keyword id="KW-0963">Cytoplasm</keyword>
<keyword id="KW-1015">Disulfide bond</keyword>
<keyword id="KW-0547">Nucleotide-binding</keyword>
<keyword id="KW-0694">RNA-binding</keyword>
<keyword id="KW-0808">Transferase</keyword>
<keyword id="KW-0819">tRNA processing</keyword>
<keyword id="KW-0820">tRNA-binding</keyword>
<evidence type="ECO:0000255" key="1">
    <source>
        <dbReference type="HAMAP-Rule" id="MF_00144"/>
    </source>
</evidence>
<protein>
    <recommendedName>
        <fullName evidence="1">tRNA-specific 2-thiouridylase MnmA</fullName>
        <ecNumber evidence="1">2.8.1.13</ecNumber>
    </recommendedName>
</protein>
<comment type="function">
    <text evidence="1">Catalyzes the 2-thiolation of uridine at the wobble position (U34) of tRNA, leading to the formation of s(2)U34.</text>
</comment>
<comment type="catalytic activity">
    <reaction evidence="1">
        <text>S-sulfanyl-L-cysteinyl-[protein] + uridine(34) in tRNA + AH2 + ATP = 2-thiouridine(34) in tRNA + L-cysteinyl-[protein] + A + AMP + diphosphate + H(+)</text>
        <dbReference type="Rhea" id="RHEA:47032"/>
        <dbReference type="Rhea" id="RHEA-COMP:10131"/>
        <dbReference type="Rhea" id="RHEA-COMP:11726"/>
        <dbReference type="Rhea" id="RHEA-COMP:11727"/>
        <dbReference type="Rhea" id="RHEA-COMP:11728"/>
        <dbReference type="ChEBI" id="CHEBI:13193"/>
        <dbReference type="ChEBI" id="CHEBI:15378"/>
        <dbReference type="ChEBI" id="CHEBI:17499"/>
        <dbReference type="ChEBI" id="CHEBI:29950"/>
        <dbReference type="ChEBI" id="CHEBI:30616"/>
        <dbReference type="ChEBI" id="CHEBI:33019"/>
        <dbReference type="ChEBI" id="CHEBI:61963"/>
        <dbReference type="ChEBI" id="CHEBI:65315"/>
        <dbReference type="ChEBI" id="CHEBI:87170"/>
        <dbReference type="ChEBI" id="CHEBI:456215"/>
        <dbReference type="EC" id="2.8.1.13"/>
    </reaction>
</comment>
<comment type="subcellular location">
    <subcellularLocation>
        <location evidence="1">Cytoplasm</location>
    </subcellularLocation>
</comment>
<comment type="similarity">
    <text evidence="1">Belongs to the MnmA/TRMU family.</text>
</comment>
<name>MNMA_VIBC1</name>
<dbReference type="EC" id="2.8.1.13" evidence="1"/>
<dbReference type="EMBL" id="CP000789">
    <property type="protein sequence ID" value="ABU70793.1"/>
    <property type="molecule type" value="Genomic_DNA"/>
</dbReference>
<dbReference type="RefSeq" id="WP_012127621.1">
    <property type="nucleotide sequence ID" value="NC_009783.1"/>
</dbReference>
<dbReference type="SMR" id="A7MSW1"/>
<dbReference type="KEGG" id="vha:VIBHAR_01824"/>
<dbReference type="PATRIC" id="fig|338187.25.peg.851"/>
<dbReference type="Proteomes" id="UP000008152">
    <property type="component" value="Chromosome I"/>
</dbReference>
<dbReference type="GO" id="GO:0005737">
    <property type="term" value="C:cytoplasm"/>
    <property type="evidence" value="ECO:0007669"/>
    <property type="project" value="UniProtKB-SubCell"/>
</dbReference>
<dbReference type="GO" id="GO:0005524">
    <property type="term" value="F:ATP binding"/>
    <property type="evidence" value="ECO:0007669"/>
    <property type="project" value="UniProtKB-KW"/>
</dbReference>
<dbReference type="GO" id="GO:0000049">
    <property type="term" value="F:tRNA binding"/>
    <property type="evidence" value="ECO:0007669"/>
    <property type="project" value="UniProtKB-KW"/>
</dbReference>
<dbReference type="GO" id="GO:0103016">
    <property type="term" value="F:tRNA-uridine 2-sulfurtransferase activity"/>
    <property type="evidence" value="ECO:0007669"/>
    <property type="project" value="UniProtKB-EC"/>
</dbReference>
<dbReference type="GO" id="GO:0002143">
    <property type="term" value="P:tRNA wobble position uridine thiolation"/>
    <property type="evidence" value="ECO:0007669"/>
    <property type="project" value="TreeGrafter"/>
</dbReference>
<dbReference type="CDD" id="cd01998">
    <property type="entry name" value="MnmA_TRMU-like"/>
    <property type="match status" value="1"/>
</dbReference>
<dbReference type="FunFam" id="2.30.30.280:FF:000001">
    <property type="entry name" value="tRNA-specific 2-thiouridylase MnmA"/>
    <property type="match status" value="1"/>
</dbReference>
<dbReference type="FunFam" id="2.40.30.10:FF:000023">
    <property type="entry name" value="tRNA-specific 2-thiouridylase MnmA"/>
    <property type="match status" value="1"/>
</dbReference>
<dbReference type="FunFam" id="3.40.50.620:FF:000004">
    <property type="entry name" value="tRNA-specific 2-thiouridylase MnmA"/>
    <property type="match status" value="1"/>
</dbReference>
<dbReference type="Gene3D" id="2.30.30.280">
    <property type="entry name" value="Adenine nucleotide alpha hydrolases-like domains"/>
    <property type="match status" value="1"/>
</dbReference>
<dbReference type="Gene3D" id="3.40.50.620">
    <property type="entry name" value="HUPs"/>
    <property type="match status" value="1"/>
</dbReference>
<dbReference type="Gene3D" id="2.40.30.10">
    <property type="entry name" value="Translation factors"/>
    <property type="match status" value="1"/>
</dbReference>
<dbReference type="HAMAP" id="MF_00144">
    <property type="entry name" value="tRNA_thiouridyl_MnmA"/>
    <property type="match status" value="1"/>
</dbReference>
<dbReference type="InterPro" id="IPR004506">
    <property type="entry name" value="MnmA-like"/>
</dbReference>
<dbReference type="InterPro" id="IPR046885">
    <property type="entry name" value="MnmA-like_C"/>
</dbReference>
<dbReference type="InterPro" id="IPR046884">
    <property type="entry name" value="MnmA-like_central"/>
</dbReference>
<dbReference type="InterPro" id="IPR023382">
    <property type="entry name" value="MnmA-like_central_sf"/>
</dbReference>
<dbReference type="InterPro" id="IPR014729">
    <property type="entry name" value="Rossmann-like_a/b/a_fold"/>
</dbReference>
<dbReference type="NCBIfam" id="NF001138">
    <property type="entry name" value="PRK00143.1"/>
    <property type="match status" value="1"/>
</dbReference>
<dbReference type="NCBIfam" id="TIGR00420">
    <property type="entry name" value="trmU"/>
    <property type="match status" value="1"/>
</dbReference>
<dbReference type="PANTHER" id="PTHR11933:SF5">
    <property type="entry name" value="MITOCHONDRIAL TRNA-SPECIFIC 2-THIOURIDYLASE 1"/>
    <property type="match status" value="1"/>
</dbReference>
<dbReference type="PANTHER" id="PTHR11933">
    <property type="entry name" value="TRNA 5-METHYLAMINOMETHYL-2-THIOURIDYLATE -METHYLTRANSFERASE"/>
    <property type="match status" value="1"/>
</dbReference>
<dbReference type="Pfam" id="PF03054">
    <property type="entry name" value="tRNA_Me_trans"/>
    <property type="match status" value="1"/>
</dbReference>
<dbReference type="Pfam" id="PF20258">
    <property type="entry name" value="tRNA_Me_trans_C"/>
    <property type="match status" value="1"/>
</dbReference>
<dbReference type="Pfam" id="PF20259">
    <property type="entry name" value="tRNA_Me_trans_M"/>
    <property type="match status" value="1"/>
</dbReference>
<dbReference type="SUPFAM" id="SSF52402">
    <property type="entry name" value="Adenine nucleotide alpha hydrolases-like"/>
    <property type="match status" value="1"/>
</dbReference>
<accession>A7MSW1</accession>
<sequence>MSDNSQKKVIVGMSGGVDSSVSAYLLKQQGYQVEGLFMKNWEEDDNEEYCTAAEDLADAQAVCDKLDIHLHTINFAAEYWDNVFEYFLAEYKAGRTPNPDILCNKEIKFKAFLEFADEVLDADYIAMGHYVRRSFPENDEKPQMLRGLDSNKDQSYFLYTLSNEQIARSLFPVGDLEKPEVRRIAEEQDLITAKKKDSTGICFIGERKFTEFLGRYLPAQPGNIETPEGEVIGQHQGLMYHTLGQRKGLHIGGRKGGGGNEDPWFVGEKDLERNVLIAVQGKDHPMLKSEGLLASQLHWVDREPIRDVMKCTVKTRYRQEDIPCTIIPIDDENIKVIFDEPQIAVTPGQSAVFYKDDVCLGGSIIEQRIKYSQA</sequence>
<organism>
    <name type="scientific">Vibrio campbellii (strain ATCC BAA-1116)</name>
    <dbReference type="NCBI Taxonomy" id="2902295"/>
    <lineage>
        <taxon>Bacteria</taxon>
        <taxon>Pseudomonadati</taxon>
        <taxon>Pseudomonadota</taxon>
        <taxon>Gammaproteobacteria</taxon>
        <taxon>Vibrionales</taxon>
        <taxon>Vibrionaceae</taxon>
        <taxon>Vibrio</taxon>
    </lineage>
</organism>
<proteinExistence type="inferred from homology"/>
<feature type="chain" id="PRO_1000009596" description="tRNA-specific 2-thiouridylase MnmA">
    <location>
        <begin position="1"/>
        <end position="374"/>
    </location>
</feature>
<feature type="region of interest" description="Interaction with target base in tRNA" evidence="1">
    <location>
        <begin position="98"/>
        <end position="100"/>
    </location>
</feature>
<feature type="region of interest" description="Interaction with tRNA" evidence="1">
    <location>
        <begin position="152"/>
        <end position="154"/>
    </location>
</feature>
<feature type="region of interest" description="Interaction with tRNA" evidence="1">
    <location>
        <begin position="316"/>
        <end position="317"/>
    </location>
</feature>
<feature type="active site" description="Nucleophile" evidence="1">
    <location>
        <position position="103"/>
    </location>
</feature>
<feature type="active site" description="Cysteine persulfide intermediate" evidence="1">
    <location>
        <position position="202"/>
    </location>
</feature>
<feature type="binding site" evidence="1">
    <location>
        <begin position="12"/>
        <end position="19"/>
    </location>
    <ligand>
        <name>ATP</name>
        <dbReference type="ChEBI" id="CHEBI:30616"/>
    </ligand>
</feature>
<feature type="binding site" evidence="1">
    <location>
        <position position="38"/>
    </location>
    <ligand>
        <name>ATP</name>
        <dbReference type="ChEBI" id="CHEBI:30616"/>
    </ligand>
</feature>
<feature type="binding site" evidence="1">
    <location>
        <position position="128"/>
    </location>
    <ligand>
        <name>ATP</name>
        <dbReference type="ChEBI" id="CHEBI:30616"/>
    </ligand>
</feature>
<feature type="site" description="Interaction with tRNA" evidence="1">
    <location>
        <position position="129"/>
    </location>
</feature>
<feature type="site" description="Interaction with tRNA" evidence="1">
    <location>
        <position position="349"/>
    </location>
</feature>
<feature type="disulfide bond" description="Alternate" evidence="1">
    <location>
        <begin position="103"/>
        <end position="202"/>
    </location>
</feature>
<reference key="1">
    <citation type="submission" date="2007-08" db="EMBL/GenBank/DDBJ databases">
        <authorList>
            <consortium name="The Vibrio harveyi Genome Sequencing Project"/>
            <person name="Bassler B."/>
            <person name="Clifton S.W."/>
            <person name="Fulton L."/>
            <person name="Delehaunty K."/>
            <person name="Fronick C."/>
            <person name="Harrison M."/>
            <person name="Markivic C."/>
            <person name="Fulton R."/>
            <person name="Tin-Wollam A.-M."/>
            <person name="Shah N."/>
            <person name="Pepin K."/>
            <person name="Nash W."/>
            <person name="Thiruvilangam P."/>
            <person name="Bhonagiri V."/>
            <person name="Waters C."/>
            <person name="Tu K.C."/>
            <person name="Irgon J."/>
            <person name="Wilson R.K."/>
        </authorList>
    </citation>
    <scope>NUCLEOTIDE SEQUENCE [LARGE SCALE GENOMIC DNA]</scope>
    <source>
        <strain>ATCC BAA-1116 / BB120</strain>
    </source>
</reference>
<gene>
    <name evidence="1" type="primary">mnmA</name>
    <name type="synonym">trmU</name>
    <name type="ordered locus">VIBHAR_01824</name>
</gene>